<dbReference type="EMBL" id="AF145252">
    <property type="protein sequence ID" value="AAD37975.1"/>
    <property type="molecule type" value="Genomic_DNA"/>
</dbReference>
<dbReference type="SMR" id="Q9XCB0"/>
<dbReference type="OMA" id="EDFLIMR"/>
<dbReference type="GO" id="GO:0005737">
    <property type="term" value="C:cytoplasm"/>
    <property type="evidence" value="ECO:0007669"/>
    <property type="project" value="UniProtKB-SubCell"/>
</dbReference>
<dbReference type="GO" id="GO:0005524">
    <property type="term" value="F:ATP binding"/>
    <property type="evidence" value="ECO:0007669"/>
    <property type="project" value="InterPro"/>
</dbReference>
<dbReference type="GO" id="GO:0046872">
    <property type="term" value="F:metal ion binding"/>
    <property type="evidence" value="ECO:0007669"/>
    <property type="project" value="TreeGrafter"/>
</dbReference>
<dbReference type="GO" id="GO:0044183">
    <property type="term" value="F:protein folding chaperone"/>
    <property type="evidence" value="ECO:0007669"/>
    <property type="project" value="InterPro"/>
</dbReference>
<dbReference type="GO" id="GO:0051087">
    <property type="term" value="F:protein-folding chaperone binding"/>
    <property type="evidence" value="ECO:0007669"/>
    <property type="project" value="TreeGrafter"/>
</dbReference>
<dbReference type="GO" id="GO:0051082">
    <property type="term" value="F:unfolded protein binding"/>
    <property type="evidence" value="ECO:0007669"/>
    <property type="project" value="TreeGrafter"/>
</dbReference>
<dbReference type="GO" id="GO:0051085">
    <property type="term" value="P:chaperone cofactor-dependent protein refolding"/>
    <property type="evidence" value="ECO:0007669"/>
    <property type="project" value="TreeGrafter"/>
</dbReference>
<dbReference type="CDD" id="cd00320">
    <property type="entry name" value="cpn10"/>
    <property type="match status" value="1"/>
</dbReference>
<dbReference type="FunFam" id="2.30.33.40:FF:000001">
    <property type="entry name" value="10 kDa chaperonin"/>
    <property type="match status" value="1"/>
</dbReference>
<dbReference type="Gene3D" id="2.30.33.40">
    <property type="entry name" value="GroES chaperonin"/>
    <property type="match status" value="1"/>
</dbReference>
<dbReference type="HAMAP" id="MF_00580">
    <property type="entry name" value="CH10"/>
    <property type="match status" value="1"/>
</dbReference>
<dbReference type="InterPro" id="IPR020818">
    <property type="entry name" value="Chaperonin_GroES"/>
</dbReference>
<dbReference type="InterPro" id="IPR037124">
    <property type="entry name" value="Chaperonin_GroES_sf"/>
</dbReference>
<dbReference type="InterPro" id="IPR018369">
    <property type="entry name" value="Chaprnonin_Cpn10_CS"/>
</dbReference>
<dbReference type="InterPro" id="IPR011032">
    <property type="entry name" value="GroES-like_sf"/>
</dbReference>
<dbReference type="NCBIfam" id="NF001531">
    <property type="entry name" value="PRK00364.2-2"/>
    <property type="match status" value="1"/>
</dbReference>
<dbReference type="NCBIfam" id="NF001533">
    <property type="entry name" value="PRK00364.2-4"/>
    <property type="match status" value="1"/>
</dbReference>
<dbReference type="NCBIfam" id="NF001534">
    <property type="entry name" value="PRK00364.2-5"/>
    <property type="match status" value="1"/>
</dbReference>
<dbReference type="PANTHER" id="PTHR10772">
    <property type="entry name" value="10 KDA HEAT SHOCK PROTEIN"/>
    <property type="match status" value="1"/>
</dbReference>
<dbReference type="PANTHER" id="PTHR10772:SF58">
    <property type="entry name" value="CO-CHAPERONIN GROES"/>
    <property type="match status" value="1"/>
</dbReference>
<dbReference type="Pfam" id="PF00166">
    <property type="entry name" value="Cpn10"/>
    <property type="match status" value="1"/>
</dbReference>
<dbReference type="PRINTS" id="PR00297">
    <property type="entry name" value="CHAPERONIN10"/>
</dbReference>
<dbReference type="SMART" id="SM00883">
    <property type="entry name" value="Cpn10"/>
    <property type="match status" value="1"/>
</dbReference>
<dbReference type="SUPFAM" id="SSF50129">
    <property type="entry name" value="GroES-like"/>
    <property type="match status" value="1"/>
</dbReference>
<dbReference type="PROSITE" id="PS00681">
    <property type="entry name" value="CHAPERONINS_CPN10"/>
    <property type="match status" value="1"/>
</dbReference>
<name>CH10_RHOMR</name>
<gene>
    <name evidence="1" type="primary">groES</name>
    <name evidence="1" type="synonym">groS</name>
</gene>
<evidence type="ECO:0000255" key="1">
    <source>
        <dbReference type="HAMAP-Rule" id="MF_00580"/>
    </source>
</evidence>
<feature type="chain" id="PRO_0000174824" description="Co-chaperonin GroES">
    <location>
        <begin position="1"/>
        <end position="100"/>
    </location>
</feature>
<comment type="function">
    <text evidence="1">Together with the chaperonin GroEL, plays an essential role in assisting protein folding. The GroEL-GroES system forms a nano-cage that allows encapsulation of the non-native substrate proteins and provides a physical environment optimized to promote and accelerate protein folding. GroES binds to the apical surface of the GroEL ring, thereby capping the opening of the GroEL channel.</text>
</comment>
<comment type="subunit">
    <text evidence="1">Heptamer of 7 subunits arranged in a ring. Interacts with the chaperonin GroEL.</text>
</comment>
<comment type="subcellular location">
    <subcellularLocation>
        <location evidence="1">Cytoplasm</location>
    </subcellularLocation>
</comment>
<comment type="similarity">
    <text evidence="1">Belongs to the GroES chaperonin family.</text>
</comment>
<keyword id="KW-0143">Chaperone</keyword>
<keyword id="KW-0963">Cytoplasm</keyword>
<reference key="1">
    <citation type="submission" date="1999-04" db="EMBL/GenBank/DDBJ databases">
        <title>Heat shock in Rhodothermus marinus: cloning and sequence analysis of the groESL, dnaK and dnaJ genes.</title>
        <authorList>
            <person name="Thorolfsdottir E.T.T."/>
            <person name="Backman V.M."/>
            <person name="Blondal T."/>
            <person name="Thorbjarnardottir S.H."/>
            <person name="Palsdottir A."/>
            <person name="Hauksdottir H."/>
            <person name="Kristjansdottir S."/>
            <person name="Eggertsson G."/>
        </authorList>
    </citation>
    <scope>NUCLEOTIDE SEQUENCE [GENOMIC DNA]</scope>
    <source>
        <strain>ITI 376</strain>
    </source>
</reference>
<sequence length="100" mass="11089">MAKVKIKPLSDRVVIKPEPPEEKTESGLYIPDTAKEKPQRGTVIAVGPGRVENGTKIEMSVKEGDKVLYGKYAGTEITIDGEEYLIMRETDILGIIEEEK</sequence>
<accession>Q9XCB0</accession>
<protein>
    <recommendedName>
        <fullName evidence="1">Co-chaperonin GroES</fullName>
    </recommendedName>
    <alternativeName>
        <fullName evidence="1">10 kDa chaperonin</fullName>
    </alternativeName>
    <alternativeName>
        <fullName evidence="1">Chaperonin-10</fullName>
        <shortName evidence="1">Cpn10</shortName>
    </alternativeName>
</protein>
<proteinExistence type="inferred from homology"/>
<organism>
    <name type="scientific">Rhodothermus marinus</name>
    <name type="common">Rhodothermus obamensis</name>
    <dbReference type="NCBI Taxonomy" id="29549"/>
    <lineage>
        <taxon>Bacteria</taxon>
        <taxon>Pseudomonadati</taxon>
        <taxon>Rhodothermota</taxon>
        <taxon>Rhodothermia</taxon>
        <taxon>Rhodothermales</taxon>
        <taxon>Rhodothermaceae</taxon>
        <taxon>Rhodothermus</taxon>
    </lineage>
</organism>